<proteinExistence type="inferred from homology"/>
<dbReference type="EMBL" id="AP003835">
    <property type="protein sequence ID" value="BAD30342.1"/>
    <property type="status" value="ALT_SEQ"/>
    <property type="molecule type" value="Genomic_DNA"/>
</dbReference>
<dbReference type="EMBL" id="AP003861">
    <property type="protein sequence ID" value="BAC24869.1"/>
    <property type="status" value="ALT_SEQ"/>
    <property type="molecule type" value="Genomic_DNA"/>
</dbReference>
<dbReference type="EMBL" id="AP014963">
    <property type="status" value="NOT_ANNOTATED_CDS"/>
    <property type="molecule type" value="Genomic_DNA"/>
</dbReference>
<dbReference type="EMBL" id="CM000144">
    <property type="status" value="NOT_ANNOTATED_CDS"/>
    <property type="molecule type" value="Genomic_DNA"/>
</dbReference>
<dbReference type="SMR" id="A3BH85"/>
<dbReference type="PaxDb" id="39947-A3BH85"/>
<dbReference type="eggNOG" id="ENOG502QVP0">
    <property type="taxonomic scope" value="Eukaryota"/>
</dbReference>
<dbReference type="HOGENOM" id="CLU_774750_0_0_1"/>
<dbReference type="InParanoid" id="A3BH85"/>
<dbReference type="Proteomes" id="UP000000763">
    <property type="component" value="Chromosome 7"/>
</dbReference>
<dbReference type="Proteomes" id="UP000007752">
    <property type="component" value="Chromosome 7"/>
</dbReference>
<dbReference type="Proteomes" id="UP000059680">
    <property type="component" value="Chromosome 7"/>
</dbReference>
<dbReference type="GO" id="GO:0005634">
    <property type="term" value="C:nucleus"/>
    <property type="evidence" value="ECO:0007669"/>
    <property type="project" value="UniProtKB-SubCell"/>
</dbReference>
<dbReference type="GO" id="GO:0003677">
    <property type="term" value="F:DNA binding"/>
    <property type="evidence" value="ECO:0007669"/>
    <property type="project" value="UniProtKB-KW"/>
</dbReference>
<dbReference type="GO" id="GO:0009734">
    <property type="term" value="P:auxin-activated signaling pathway"/>
    <property type="evidence" value="ECO:0007669"/>
    <property type="project" value="UniProtKB-KW"/>
</dbReference>
<dbReference type="GO" id="GO:0006355">
    <property type="term" value="P:regulation of DNA-templated transcription"/>
    <property type="evidence" value="ECO:0007669"/>
    <property type="project" value="InterPro"/>
</dbReference>
<dbReference type="CDD" id="cd10017">
    <property type="entry name" value="B3_DNA"/>
    <property type="match status" value="2"/>
</dbReference>
<dbReference type="Gene3D" id="2.30.30.1040">
    <property type="match status" value="1"/>
</dbReference>
<dbReference type="Gene3D" id="2.40.330.10">
    <property type="entry name" value="DNA-binding pseudobarrel domain"/>
    <property type="match status" value="2"/>
</dbReference>
<dbReference type="InterPro" id="IPR010525">
    <property type="entry name" value="ARF_dom"/>
</dbReference>
<dbReference type="InterPro" id="IPR044835">
    <property type="entry name" value="ARF_plant"/>
</dbReference>
<dbReference type="InterPro" id="IPR003340">
    <property type="entry name" value="B3_DNA-bd"/>
</dbReference>
<dbReference type="InterPro" id="IPR015300">
    <property type="entry name" value="DNA-bd_pseudobarrel_sf"/>
</dbReference>
<dbReference type="PANTHER" id="PTHR31384:SF94">
    <property type="entry name" value="AUXIN RESPONSE FACTOR 17"/>
    <property type="match status" value="1"/>
</dbReference>
<dbReference type="PANTHER" id="PTHR31384">
    <property type="entry name" value="AUXIN RESPONSE FACTOR 4-RELATED"/>
    <property type="match status" value="1"/>
</dbReference>
<dbReference type="Pfam" id="PF06507">
    <property type="entry name" value="ARF_AD"/>
    <property type="match status" value="1"/>
</dbReference>
<dbReference type="Pfam" id="PF02362">
    <property type="entry name" value="B3"/>
    <property type="match status" value="2"/>
</dbReference>
<dbReference type="SMART" id="SM01019">
    <property type="entry name" value="B3"/>
    <property type="match status" value="2"/>
</dbReference>
<dbReference type="SUPFAM" id="SSF101936">
    <property type="entry name" value="DNA-binding pseudobarrel domain"/>
    <property type="match status" value="2"/>
</dbReference>
<dbReference type="PROSITE" id="PS50863">
    <property type="entry name" value="B3"/>
    <property type="match status" value="2"/>
</dbReference>
<organism>
    <name type="scientific">Oryza sativa subsp. japonica</name>
    <name type="common">Rice</name>
    <dbReference type="NCBI Taxonomy" id="39947"/>
    <lineage>
        <taxon>Eukaryota</taxon>
        <taxon>Viridiplantae</taxon>
        <taxon>Streptophyta</taxon>
        <taxon>Embryophyta</taxon>
        <taxon>Tracheophyta</taxon>
        <taxon>Spermatophyta</taxon>
        <taxon>Magnoliopsida</taxon>
        <taxon>Liliopsida</taxon>
        <taxon>Poales</taxon>
        <taxon>Poaceae</taxon>
        <taxon>BOP clade</taxon>
        <taxon>Oryzoideae</taxon>
        <taxon>Oryzeae</taxon>
        <taxon>Oryzinae</taxon>
        <taxon>Oryza</taxon>
        <taxon>Oryza sativa</taxon>
    </lineage>
</organism>
<gene>
    <name type="primary">ARF20</name>
    <name type="ordered locus">Os07g0183100</name>
    <name type="ordered locus">LOC_Os07g08520</name>
    <name type="ORF">OJ1046_F10.103</name>
    <name type="ORF">OJ1506_G02.20</name>
    <name type="ORF">OsJ_022407</name>
</gene>
<comment type="function">
    <text>Auxin response factors (ARFs) are transcriptional factors that bind specifically to the DNA sequence 5'-TGTCTC-3' found in the auxin-responsive promoter elements (AuxREs).</text>
</comment>
<comment type="subunit">
    <text evidence="1">Homo and heterodimers.</text>
</comment>
<comment type="subcellular location">
    <subcellularLocation>
        <location evidence="2">Nucleus</location>
    </subcellularLocation>
</comment>
<comment type="similarity">
    <text evidence="4">Belongs to the ARF family.</text>
</comment>
<comment type="sequence caution" evidence="4">
    <conflict type="erroneous gene model prediction">
        <sequence resource="EMBL-CDS" id="BAC24869"/>
    </conflict>
</comment>
<comment type="sequence caution" evidence="4">
    <conflict type="erroneous gene model prediction">
        <sequence resource="EMBL-CDS" id="BAD30342"/>
    </conflict>
</comment>
<evidence type="ECO:0000250" key="1"/>
<evidence type="ECO:0000255" key="2">
    <source>
        <dbReference type="PROSITE-ProRule" id="PRU00326"/>
    </source>
</evidence>
<evidence type="ECO:0000256" key="3">
    <source>
        <dbReference type="SAM" id="MobiDB-lite"/>
    </source>
</evidence>
<evidence type="ECO:0000305" key="4"/>
<sequence length="728" mass="79662">MAQPPDAAAAAAVPPPVVIDRDVWHACAVPYSGVLPGVGTLVYYIPHGHIEQCAEDPALLLSRLPDPIHPVPCTVADLVLDVDAESGEAYATISLLPGSHDDTTARRQVPAHGEPGFRFFEKQLSPADVTSNALVLPAGAEHVLPPLDIAAYQTARLFDVRDLRGKRFEFVHIWDKKRCRYMLGDLGVNDNDGWRGFVKAKRLATRDTVVFMRRGGGDGDGDGELLVGVRRAPRARGGHHPRPGVEDNKVVSEVWLAMQGVTPFEVTYYPREGTFEFVVSRDEYIGFSFSPFYPFVPGTTVHLRMNPLQIAQSISGTVRTFDHLRPWRMLEVDWDQAASPISYRIHRQVNSWQVLRQPQPAATTSAVRIRDAIVATPQVQIMALPRPPPPTTTTGMVPSDDSYAMISLFPGDCYVTHRPLPAARDPVGGQREFCFFDKKLSPSDAAANGGGSGALFVIPKPSAAEHVLPRIPDLRVTNLQGGRWEFGHTWSDADTDRRSSSHTLAAGWSAFVKAKRLCVGDTVIFMRRRPGGEPLVGVRRKPHGGMPVGIPDKHVADAWLDASSAQPFRVTYCPWQGTAEFVVRREEVEGSPPLAPGTRVRLLMNPDDARRRSQPPVYGTVRDVHCRSEWRMLEVDWDRDSPLAPTMNRRVNSWQVQPVQLALPPQGSDEEAAAATTSTAHAGDATTSAPSLALQLQTMASSSSSSAPIIPSRGSAFRIVNPRDGSQG</sequence>
<keyword id="KW-0927">Auxin signaling pathway</keyword>
<keyword id="KW-0238">DNA-binding</keyword>
<keyword id="KW-0539">Nucleus</keyword>
<keyword id="KW-1185">Reference proteome</keyword>
<keyword id="KW-0804">Transcription</keyword>
<keyword id="KW-0805">Transcription regulation</keyword>
<accession>A3BH85</accession>
<accession>Q8H508</accession>
<protein>
    <recommendedName>
        <fullName>Putative auxin response factor 20</fullName>
    </recommendedName>
</protein>
<name>ARFT_ORYSJ</name>
<reference key="1">
    <citation type="journal article" date="2005" name="Nature">
        <title>The map-based sequence of the rice genome.</title>
        <authorList>
            <consortium name="International rice genome sequencing project (IRGSP)"/>
        </authorList>
    </citation>
    <scope>NUCLEOTIDE SEQUENCE [LARGE SCALE GENOMIC DNA]</scope>
    <source>
        <strain>cv. Nipponbare</strain>
    </source>
</reference>
<reference key="2">
    <citation type="journal article" date="2013" name="Rice">
        <title>Improvement of the Oryza sativa Nipponbare reference genome using next generation sequence and optical map data.</title>
        <authorList>
            <person name="Kawahara Y."/>
            <person name="de la Bastide M."/>
            <person name="Hamilton J.P."/>
            <person name="Kanamori H."/>
            <person name="McCombie W.R."/>
            <person name="Ouyang S."/>
            <person name="Schwartz D.C."/>
            <person name="Tanaka T."/>
            <person name="Wu J."/>
            <person name="Zhou S."/>
            <person name="Childs K.L."/>
            <person name="Davidson R.M."/>
            <person name="Lin H."/>
            <person name="Quesada-Ocampo L."/>
            <person name="Vaillancourt B."/>
            <person name="Sakai H."/>
            <person name="Lee S.S."/>
            <person name="Kim J."/>
            <person name="Numa H."/>
            <person name="Itoh T."/>
            <person name="Buell C.R."/>
            <person name="Matsumoto T."/>
        </authorList>
    </citation>
    <scope>GENOME REANNOTATION</scope>
    <source>
        <strain>cv. Nipponbare</strain>
    </source>
</reference>
<reference key="3">
    <citation type="journal article" date="2005" name="PLoS Biol.">
        <title>The genomes of Oryza sativa: a history of duplications.</title>
        <authorList>
            <person name="Yu J."/>
            <person name="Wang J."/>
            <person name="Lin W."/>
            <person name="Li S."/>
            <person name="Li H."/>
            <person name="Zhou J."/>
            <person name="Ni P."/>
            <person name="Dong W."/>
            <person name="Hu S."/>
            <person name="Zeng C."/>
            <person name="Zhang J."/>
            <person name="Zhang Y."/>
            <person name="Li R."/>
            <person name="Xu Z."/>
            <person name="Li S."/>
            <person name="Li X."/>
            <person name="Zheng H."/>
            <person name="Cong L."/>
            <person name="Lin L."/>
            <person name="Yin J."/>
            <person name="Geng J."/>
            <person name="Li G."/>
            <person name="Shi J."/>
            <person name="Liu J."/>
            <person name="Lv H."/>
            <person name="Li J."/>
            <person name="Wang J."/>
            <person name="Deng Y."/>
            <person name="Ran L."/>
            <person name="Shi X."/>
            <person name="Wang X."/>
            <person name="Wu Q."/>
            <person name="Li C."/>
            <person name="Ren X."/>
            <person name="Wang J."/>
            <person name="Wang X."/>
            <person name="Li D."/>
            <person name="Liu D."/>
            <person name="Zhang X."/>
            <person name="Ji Z."/>
            <person name="Zhao W."/>
            <person name="Sun Y."/>
            <person name="Zhang Z."/>
            <person name="Bao J."/>
            <person name="Han Y."/>
            <person name="Dong L."/>
            <person name="Ji J."/>
            <person name="Chen P."/>
            <person name="Wu S."/>
            <person name="Liu J."/>
            <person name="Xiao Y."/>
            <person name="Bu D."/>
            <person name="Tan J."/>
            <person name="Yang L."/>
            <person name="Ye C."/>
            <person name="Zhang J."/>
            <person name="Xu J."/>
            <person name="Zhou Y."/>
            <person name="Yu Y."/>
            <person name="Zhang B."/>
            <person name="Zhuang S."/>
            <person name="Wei H."/>
            <person name="Liu B."/>
            <person name="Lei M."/>
            <person name="Yu H."/>
            <person name="Li Y."/>
            <person name="Xu H."/>
            <person name="Wei S."/>
            <person name="He X."/>
            <person name="Fang L."/>
            <person name="Zhang Z."/>
            <person name="Zhang Y."/>
            <person name="Huang X."/>
            <person name="Su Z."/>
            <person name="Tong W."/>
            <person name="Li J."/>
            <person name="Tong Z."/>
            <person name="Li S."/>
            <person name="Ye J."/>
            <person name="Wang L."/>
            <person name="Fang L."/>
            <person name="Lei T."/>
            <person name="Chen C.-S."/>
            <person name="Chen H.-C."/>
            <person name="Xu Z."/>
            <person name="Li H."/>
            <person name="Huang H."/>
            <person name="Zhang F."/>
            <person name="Xu H."/>
            <person name="Li N."/>
            <person name="Zhao C."/>
            <person name="Li S."/>
            <person name="Dong L."/>
            <person name="Huang Y."/>
            <person name="Li L."/>
            <person name="Xi Y."/>
            <person name="Qi Q."/>
            <person name="Li W."/>
            <person name="Zhang B."/>
            <person name="Hu W."/>
            <person name="Zhang Y."/>
            <person name="Tian X."/>
            <person name="Jiao Y."/>
            <person name="Liang X."/>
            <person name="Jin J."/>
            <person name="Gao L."/>
            <person name="Zheng W."/>
            <person name="Hao B."/>
            <person name="Liu S.-M."/>
            <person name="Wang W."/>
            <person name="Yuan L."/>
            <person name="Cao M."/>
            <person name="McDermott J."/>
            <person name="Samudrala R."/>
            <person name="Wang J."/>
            <person name="Wong G.K.-S."/>
            <person name="Yang H."/>
        </authorList>
    </citation>
    <scope>NUCLEOTIDE SEQUENCE [LARGE SCALE GENOMIC DNA]</scope>
    <source>
        <strain>cv. Nipponbare</strain>
    </source>
</reference>
<reference key="4">
    <citation type="journal article" date="2007" name="Gene">
        <title>Genome-wide analysis of the auxin response factors (ARF) gene family in rice (Oryza sativa).</title>
        <authorList>
            <person name="Wang D."/>
            <person name="Pei K."/>
            <person name="Fu Y."/>
            <person name="Sun Z."/>
            <person name="Li S."/>
            <person name="Liu H."/>
            <person name="Tang K."/>
            <person name="Han B."/>
            <person name="Tao Y."/>
        </authorList>
    </citation>
    <scope>GENE FAMILY</scope>
    <scope>NOMENCLATURE</scope>
</reference>
<feature type="chain" id="PRO_0000299279" description="Putative auxin response factor 20">
    <location>
        <begin position="1"/>
        <end position="728"/>
    </location>
</feature>
<feature type="DNA-binding region" description="TF-B3 1" evidence="2">
    <location>
        <begin position="119"/>
        <end position="233"/>
    </location>
</feature>
<feature type="region of interest" description="Disordered" evidence="3">
    <location>
        <begin position="665"/>
        <end position="728"/>
    </location>
</feature>
<feature type="compositionally biased region" description="Low complexity" evidence="3">
    <location>
        <begin position="665"/>
        <end position="689"/>
    </location>
</feature>
<feature type="compositionally biased region" description="Low complexity" evidence="3">
    <location>
        <begin position="700"/>
        <end position="712"/>
    </location>
</feature>